<protein>
    <recommendedName>
        <fullName>Lymphotoxin-beta</fullName>
        <shortName>LT-beta</shortName>
    </recommendedName>
    <alternativeName>
        <fullName>Tumor necrosis factor C</fullName>
        <shortName>TNF-C</shortName>
    </alternativeName>
    <alternativeName>
        <fullName>Tumor necrosis factor ligand superfamily member 3</fullName>
    </alternativeName>
</protein>
<feature type="chain" id="PRO_0000185492" description="Lymphotoxin-beta">
    <location>
        <begin position="1" status="less than"/>
        <end position="150"/>
    </location>
</feature>
<feature type="domain" description="THD" evidence="3">
    <location>
        <begin position="1"/>
        <end position="149"/>
    </location>
</feature>
<feature type="glycosylation site" description="N-linked (GlcNAc...) asparagine" evidence="2">
    <location>
        <position position="128"/>
    </location>
</feature>
<feature type="non-terminal residue">
    <location>
        <position position="1"/>
    </location>
</feature>
<organism>
    <name type="scientific">Sus scrofa</name>
    <name type="common">Pig</name>
    <dbReference type="NCBI Taxonomy" id="9823"/>
    <lineage>
        <taxon>Eukaryota</taxon>
        <taxon>Metazoa</taxon>
        <taxon>Chordata</taxon>
        <taxon>Craniata</taxon>
        <taxon>Vertebrata</taxon>
        <taxon>Euteleostomi</taxon>
        <taxon>Mammalia</taxon>
        <taxon>Eutheria</taxon>
        <taxon>Laurasiatheria</taxon>
        <taxon>Artiodactyla</taxon>
        <taxon>Suina</taxon>
        <taxon>Suidae</taxon>
        <taxon>Sus</taxon>
    </lineage>
</organism>
<proteinExistence type="inferred from homology"/>
<name>TNFC_PIG</name>
<comment type="function">
    <text>Cytokine that binds to LTBR/TNFRSF3. May play a specific role in immune response regulation. Provides the membrane anchor for the attachment of the heterotrimeric complex to the cell surface.</text>
</comment>
<comment type="subunit">
    <text>Heterotrimer of either two LTB and one LTA subunits or (less prevalent) two LTA and one LTB subunits.</text>
</comment>
<comment type="subcellular location">
    <subcellularLocation>
        <location evidence="1">Membrane</location>
        <topology evidence="1">Single-pass type II membrane protein</topology>
    </subcellularLocation>
</comment>
<comment type="similarity">
    <text evidence="4">Belongs to the tumor necrosis factor family.</text>
</comment>
<sequence>AWITGQGLGWEAKKEEAFLRSGTQFSGAEGLALPQDGLYYLYCHVGYRGRAPPPGGDPLDRSVTLLSRLYRAGGAYGPGTPELLLEGAETVTPVLDPSRRHEYGPLWYTSVGFGGLVQLRRGERVYVNISHPDMVDYRRGKTFFGAVMVG</sequence>
<accession>Q9TSV8</accession>
<keyword id="KW-0202">Cytokine</keyword>
<keyword id="KW-0325">Glycoprotein</keyword>
<keyword id="KW-0472">Membrane</keyword>
<keyword id="KW-1185">Reference proteome</keyword>
<dbReference type="EMBL" id="AJ251914">
    <property type="protein sequence ID" value="CAB63851.1"/>
    <property type="molecule type" value="Genomic_DNA"/>
</dbReference>
<dbReference type="SMR" id="Q9TSV8"/>
<dbReference type="FunCoup" id="Q9TSV8">
    <property type="interactions" value="83"/>
</dbReference>
<dbReference type="GlyCosmos" id="Q9TSV8">
    <property type="glycosylation" value="1 site, No reported glycans"/>
</dbReference>
<dbReference type="GlyGen" id="Q9TSV8">
    <property type="glycosylation" value="1 site"/>
</dbReference>
<dbReference type="PaxDb" id="9823-ENSSSCP00000001493"/>
<dbReference type="eggNOG" id="ENOG502SMSQ">
    <property type="taxonomic scope" value="Eukaryota"/>
</dbReference>
<dbReference type="HOGENOM" id="CLU_096531_0_0_1"/>
<dbReference type="InParanoid" id="Q9TSV8"/>
<dbReference type="Proteomes" id="UP000008227">
    <property type="component" value="Unplaced"/>
</dbReference>
<dbReference type="Proteomes" id="UP000314985">
    <property type="component" value="Unplaced"/>
</dbReference>
<dbReference type="Proteomes" id="UP000694570">
    <property type="component" value="Unplaced"/>
</dbReference>
<dbReference type="Proteomes" id="UP000694571">
    <property type="component" value="Unplaced"/>
</dbReference>
<dbReference type="Proteomes" id="UP000694720">
    <property type="component" value="Unplaced"/>
</dbReference>
<dbReference type="Proteomes" id="UP000694722">
    <property type="component" value="Unplaced"/>
</dbReference>
<dbReference type="Proteomes" id="UP000694723">
    <property type="component" value="Unplaced"/>
</dbReference>
<dbReference type="Proteomes" id="UP000694724">
    <property type="component" value="Unplaced"/>
</dbReference>
<dbReference type="Proteomes" id="UP000694725">
    <property type="component" value="Unplaced"/>
</dbReference>
<dbReference type="Proteomes" id="UP000694726">
    <property type="component" value="Unplaced"/>
</dbReference>
<dbReference type="Proteomes" id="UP000694727">
    <property type="component" value="Unplaced"/>
</dbReference>
<dbReference type="Proteomes" id="UP000694728">
    <property type="component" value="Unplaced"/>
</dbReference>
<dbReference type="GO" id="GO:0005615">
    <property type="term" value="C:extracellular space"/>
    <property type="evidence" value="ECO:0000318"/>
    <property type="project" value="GO_Central"/>
</dbReference>
<dbReference type="GO" id="GO:0016020">
    <property type="term" value="C:membrane"/>
    <property type="evidence" value="ECO:0007669"/>
    <property type="project" value="UniProtKB-SubCell"/>
</dbReference>
<dbReference type="GO" id="GO:0005125">
    <property type="term" value="F:cytokine activity"/>
    <property type="evidence" value="ECO:0000318"/>
    <property type="project" value="GO_Central"/>
</dbReference>
<dbReference type="GO" id="GO:0005164">
    <property type="term" value="F:tumor necrosis factor receptor binding"/>
    <property type="evidence" value="ECO:0007669"/>
    <property type="project" value="InterPro"/>
</dbReference>
<dbReference type="GO" id="GO:0007166">
    <property type="term" value="P:cell surface receptor signaling pathway"/>
    <property type="evidence" value="ECO:0000318"/>
    <property type="project" value="GO_Central"/>
</dbReference>
<dbReference type="GO" id="GO:0006955">
    <property type="term" value="P:immune response"/>
    <property type="evidence" value="ECO:0007669"/>
    <property type="project" value="InterPro"/>
</dbReference>
<dbReference type="GO" id="GO:0043123">
    <property type="term" value="P:positive regulation of canonical NF-kappaB signal transduction"/>
    <property type="evidence" value="ECO:0000318"/>
    <property type="project" value="GO_Central"/>
</dbReference>
<dbReference type="GO" id="GO:2001238">
    <property type="term" value="P:positive regulation of extrinsic apoptotic signaling pathway"/>
    <property type="evidence" value="ECO:0000318"/>
    <property type="project" value="GO_Central"/>
</dbReference>
<dbReference type="GO" id="GO:0032735">
    <property type="term" value="P:positive regulation of interleukin-12 production"/>
    <property type="evidence" value="ECO:0000250"/>
    <property type="project" value="UniProtKB"/>
</dbReference>
<dbReference type="CDD" id="cd00184">
    <property type="entry name" value="TNF"/>
    <property type="match status" value="1"/>
</dbReference>
<dbReference type="FunFam" id="2.60.120.40:FF:000030">
    <property type="entry name" value="Lymphotoxin-beta"/>
    <property type="match status" value="1"/>
</dbReference>
<dbReference type="Gene3D" id="2.60.120.40">
    <property type="match status" value="1"/>
</dbReference>
<dbReference type="InterPro" id="IPR006053">
    <property type="entry name" value="TNF"/>
</dbReference>
<dbReference type="InterPro" id="IPR002961">
    <property type="entry name" value="TNF_C"/>
</dbReference>
<dbReference type="InterPro" id="IPR021184">
    <property type="entry name" value="TNF_CS"/>
</dbReference>
<dbReference type="InterPro" id="IPR006052">
    <property type="entry name" value="TNF_dom"/>
</dbReference>
<dbReference type="InterPro" id="IPR008983">
    <property type="entry name" value="Tumour_necrosis_fac-like_dom"/>
</dbReference>
<dbReference type="PANTHER" id="PTHR11471:SF29">
    <property type="entry name" value="LYMPHOTOXIN-BETA"/>
    <property type="match status" value="1"/>
</dbReference>
<dbReference type="PANTHER" id="PTHR11471">
    <property type="entry name" value="TUMOR NECROSIS FACTOR FAMILY MEMBER"/>
    <property type="match status" value="1"/>
</dbReference>
<dbReference type="Pfam" id="PF00229">
    <property type="entry name" value="TNF"/>
    <property type="match status" value="1"/>
</dbReference>
<dbReference type="PRINTS" id="PR01234">
    <property type="entry name" value="TNECROSISFCT"/>
</dbReference>
<dbReference type="PRINTS" id="PR01237">
    <property type="entry name" value="TNFC"/>
</dbReference>
<dbReference type="SMART" id="SM00207">
    <property type="entry name" value="TNF"/>
    <property type="match status" value="1"/>
</dbReference>
<dbReference type="SUPFAM" id="SSF49842">
    <property type="entry name" value="TNF-like"/>
    <property type="match status" value="1"/>
</dbReference>
<dbReference type="PROSITE" id="PS00251">
    <property type="entry name" value="THD_1"/>
    <property type="match status" value="1"/>
</dbReference>
<dbReference type="PROSITE" id="PS50049">
    <property type="entry name" value="THD_2"/>
    <property type="match status" value="1"/>
</dbReference>
<evidence type="ECO:0000250" key="1"/>
<evidence type="ECO:0000255" key="2"/>
<evidence type="ECO:0000255" key="3">
    <source>
        <dbReference type="PROSITE-ProRule" id="PRU01387"/>
    </source>
</evidence>
<evidence type="ECO:0000305" key="4"/>
<gene>
    <name type="primary">LTB</name>
    <name type="synonym">TNFC</name>
    <name type="synonym">TNFSF3</name>
</gene>
<reference key="1">
    <citation type="journal article" date="2001" name="Tissue Antigens">
        <title>Sequence of the swine major histocompatibility complex region containing all non-classical class I genes.</title>
        <authorList>
            <person name="Chardon P."/>
            <person name="Rogel-Gaillard C."/>
            <person name="Cattolico L."/>
            <person name="Duprat S."/>
            <person name="Vaiman M."/>
            <person name="Renard C."/>
        </authorList>
    </citation>
    <scope>NUCLEOTIDE SEQUENCE [LARGE SCALE GENOMIC DNA]</scope>
    <source>
        <strain>Large white</strain>
        <tissue>Fibroblast</tissue>
    </source>
</reference>